<organism>
    <name type="scientific">Dengue virus type 1 (strain Brazil/97-11/1997)</name>
    <name type="common">DENV-1</name>
    <dbReference type="NCBI Taxonomy" id="408685"/>
    <lineage>
        <taxon>Viruses</taxon>
        <taxon>Riboviria</taxon>
        <taxon>Orthornavirae</taxon>
        <taxon>Kitrinoviricota</taxon>
        <taxon>Flasuviricetes</taxon>
        <taxon>Amarillovirales</taxon>
        <taxon>Flaviviridae</taxon>
        <taxon>Orthoflavivirus</taxon>
        <taxon>Orthoflavivirus denguei</taxon>
        <taxon>Dengue virus</taxon>
    </lineage>
</organism>
<reference key="1">
    <citation type="journal article" date="1989" name="J. Gen. Virol.">
        <title>Genetic relatedness among structural protein genes of dengue 1 virus strains.</title>
        <authorList>
            <person name="Chu M.C."/>
            <person name="O'Rourke E.J."/>
            <person name="Trent D.W."/>
        </authorList>
    </citation>
    <scope>NUCLEOTIDE SEQUENCE [GENOMIC RNA] OF 232-786</scope>
    <source>
        <strain>Isolate Caribbean/924-1</strain>
    </source>
</reference>
<reference key="2">
    <citation type="journal article" date="1992" name="J. Gen. Virol.">
        <title>Envelope protein sequences of dengue virus isolates TH-36 and TH-Sman, and identification of a type-specific genetic marker for dengue and tick-borne flaviviruses.</title>
        <authorList>
            <person name="Shiu S.Y.W."/>
            <person name="Jiang W.R."/>
            <person name="Porterfield J.S."/>
            <person name="Gould E.A."/>
        </authorList>
    </citation>
    <scope>NUCLEOTIDE SEQUENCE [GENOMIC RNA] OF 281-778</scope>
    <source>
        <strain>Isolate Thailand/TH-Sman/1958</strain>
    </source>
</reference>
<reference key="3">
    <citation type="journal article" date="2002" name="Virus Res.">
        <title>Genome analysis of dengue type-1 virus isolated between 1990 and 2001 in Brazil reveals a remarkable conservation of the structural proteins but amino acid differences in the non-structural proteins.</title>
        <authorList>
            <person name="Duarte dos Santos C.N."/>
            <person name="Rocha C.F.S."/>
            <person name="Cordeiro M."/>
            <person name="Fragoso S.P."/>
            <person name="Rey F."/>
            <person name="Deubel V."/>
            <person name="Despres P."/>
        </authorList>
    </citation>
    <scope>NUCLEOTIDE SEQUENCE [GENOMIC RNA]</scope>
</reference>
<organismHost>
    <name type="scientific">Aedes aegypti</name>
    <name type="common">Yellowfever mosquito</name>
    <name type="synonym">Culex aegypti</name>
    <dbReference type="NCBI Taxonomy" id="7159"/>
</organismHost>
<organismHost>
    <name type="scientific">Aedes albopictus</name>
    <name type="common">Asian tiger mosquito</name>
    <name type="synonym">Stegomyia albopicta</name>
    <dbReference type="NCBI Taxonomy" id="7160"/>
</organismHost>
<organismHost>
    <name type="scientific">Homo sapiens</name>
    <name type="common">Human</name>
    <dbReference type="NCBI Taxonomy" id="9606"/>
</organismHost>
<protein>
    <recommendedName>
        <fullName>Genome polyprotein</fullName>
    </recommendedName>
    <component>
        <recommendedName>
            <fullName>Protein C</fullName>
        </recommendedName>
        <alternativeName>
            <fullName>Core protein</fullName>
        </alternativeName>
    </component>
    <component>
        <recommendedName>
            <fullName>Protein prM</fullName>
        </recommendedName>
    </component>
    <component>
        <recommendedName>
            <fullName>Peptide pr</fullName>
        </recommendedName>
    </component>
    <component>
        <recommendedName>
            <fullName>Small envelope protein M</fullName>
        </recommendedName>
        <alternativeName>
            <fullName>Matrix protein</fullName>
        </alternativeName>
    </component>
    <component>
        <recommendedName>
            <fullName>Envelope protein E</fullName>
        </recommendedName>
    </component>
    <component>
        <recommendedName>
            <fullName>Non-structural protein 1</fullName>
            <shortName>NS1</shortName>
        </recommendedName>
    </component>
    <component>
        <recommendedName>
            <fullName>Non-structural protein 2A</fullName>
            <shortName>NS2A</shortName>
        </recommendedName>
    </component>
    <component>
        <recommendedName>
            <fullName>Non-structural protein 2A-alpha</fullName>
            <shortName>NS2A-alpha</shortName>
        </recommendedName>
    </component>
    <component>
        <recommendedName>
            <fullName>Serine protease subunit NS2B</fullName>
        </recommendedName>
        <alternativeName>
            <fullName>Flavivirin protease NS2B regulatory subunit</fullName>
        </alternativeName>
        <alternativeName>
            <fullName>Non-structural protein 2B</fullName>
        </alternativeName>
    </component>
    <component>
        <recommendedName>
            <fullName>Serine protease NS3</fullName>
            <ecNumber>3.4.21.91</ecNumber>
            <ecNumber>3.6.1.15</ecNumber>
            <ecNumber>3.6.4.13</ecNumber>
        </recommendedName>
        <alternativeName>
            <fullName>Flavivirin protease NS3 catalytic subunit</fullName>
        </alternativeName>
        <alternativeName>
            <fullName>Non-structural protein 3</fullName>
        </alternativeName>
    </component>
    <component>
        <recommendedName>
            <fullName>Non-structural protein 4A</fullName>
            <shortName>NS4A</shortName>
        </recommendedName>
    </component>
    <component>
        <recommendedName>
            <fullName>Peptide 2k</fullName>
        </recommendedName>
    </component>
    <component>
        <recommendedName>
            <fullName>Non-structural protein 4B</fullName>
            <shortName>NS4B</shortName>
        </recommendedName>
    </component>
    <component>
        <recommendedName>
            <fullName>RNA-directed RNA polymerase NS5</fullName>
            <ecNumber evidence="13">2.1.1.56</ecNumber>
            <ecNumber evidence="13">2.1.1.57</ecNumber>
            <ecNumber>2.7.7.48</ecNumber>
        </recommendedName>
        <alternativeName>
            <fullName>Non-structural protein 5</fullName>
        </alternativeName>
    </component>
</protein>
<dbReference type="EC" id="3.4.21.91"/>
<dbReference type="EC" id="3.6.1.15"/>
<dbReference type="EC" id="3.6.4.13"/>
<dbReference type="EC" id="2.1.1.56" evidence="13"/>
<dbReference type="EC" id="2.1.1.57" evidence="13"/>
<dbReference type="EC" id="2.7.7.48"/>
<dbReference type="EMBL" id="D00504">
    <property type="protein sequence ID" value="BAA00396.1"/>
    <property type="molecule type" value="Genomic_RNA"/>
</dbReference>
<dbReference type="EMBL" id="D10513">
    <property type="protein sequence ID" value="BAA01388.1"/>
    <property type="molecule type" value="Genomic_RNA"/>
</dbReference>
<dbReference type="EMBL" id="AF311956">
    <property type="protein sequence ID" value="AAN60368.1"/>
    <property type="molecule type" value="Genomic_RNA"/>
</dbReference>
<dbReference type="PIR" id="JQ1405">
    <property type="entry name" value="JQ1405"/>
</dbReference>
<dbReference type="PDB" id="3UZQ">
    <property type="method" value="X-ray"/>
    <property type="resolution" value="1.60 A"/>
    <property type="chains" value="B=578-680"/>
</dbReference>
<dbReference type="PDBsum" id="3UZQ"/>
<dbReference type="SMR" id="P27909"/>
<dbReference type="ELM" id="P27909"/>
<dbReference type="MEROPS" id="S07.001"/>
<dbReference type="ABCD" id="P27909">
    <property type="antibodies" value="1 sequenced antibody"/>
</dbReference>
<dbReference type="EvolutionaryTrace" id="P27909"/>
<dbReference type="PRO" id="PR:P27909"/>
<dbReference type="Proteomes" id="UP000007764">
    <property type="component" value="Genome"/>
</dbReference>
<dbReference type="GO" id="GO:0005576">
    <property type="term" value="C:extracellular region"/>
    <property type="evidence" value="ECO:0007669"/>
    <property type="project" value="UniProtKB-SubCell"/>
</dbReference>
<dbReference type="GO" id="GO:0044167">
    <property type="term" value="C:host cell endoplasmic reticulum membrane"/>
    <property type="evidence" value="ECO:0007669"/>
    <property type="project" value="UniProtKB-SubCell"/>
</dbReference>
<dbReference type="GO" id="GO:0033650">
    <property type="term" value="C:host cell mitochondrion"/>
    <property type="evidence" value="ECO:0007669"/>
    <property type="project" value="UniProtKB-SubCell"/>
</dbReference>
<dbReference type="GO" id="GO:0042025">
    <property type="term" value="C:host cell nucleus"/>
    <property type="evidence" value="ECO:0007669"/>
    <property type="project" value="UniProtKB-SubCell"/>
</dbReference>
<dbReference type="GO" id="GO:0016020">
    <property type="term" value="C:membrane"/>
    <property type="evidence" value="ECO:0007669"/>
    <property type="project" value="UniProtKB-KW"/>
</dbReference>
<dbReference type="GO" id="GO:0019028">
    <property type="term" value="C:viral capsid"/>
    <property type="evidence" value="ECO:0007669"/>
    <property type="project" value="UniProtKB-KW"/>
</dbReference>
<dbReference type="GO" id="GO:0019031">
    <property type="term" value="C:viral envelope"/>
    <property type="evidence" value="ECO:0007669"/>
    <property type="project" value="UniProtKB-KW"/>
</dbReference>
<dbReference type="GO" id="GO:0055036">
    <property type="term" value="C:virion membrane"/>
    <property type="evidence" value="ECO:0007669"/>
    <property type="project" value="UniProtKB-SubCell"/>
</dbReference>
<dbReference type="GO" id="GO:0005524">
    <property type="term" value="F:ATP binding"/>
    <property type="evidence" value="ECO:0007669"/>
    <property type="project" value="UniProtKB-KW"/>
</dbReference>
<dbReference type="GO" id="GO:0016887">
    <property type="term" value="F:ATP hydrolysis activity"/>
    <property type="evidence" value="ECO:0007669"/>
    <property type="project" value="RHEA"/>
</dbReference>
<dbReference type="GO" id="GO:0015267">
    <property type="term" value="F:channel activity"/>
    <property type="evidence" value="ECO:0007669"/>
    <property type="project" value="UniProtKB-KW"/>
</dbReference>
<dbReference type="GO" id="GO:0003725">
    <property type="term" value="F:double-stranded RNA binding"/>
    <property type="evidence" value="ECO:0007669"/>
    <property type="project" value="InterPro"/>
</dbReference>
<dbReference type="GO" id="GO:0046872">
    <property type="term" value="F:metal ion binding"/>
    <property type="evidence" value="ECO:0007669"/>
    <property type="project" value="UniProtKB-KW"/>
</dbReference>
<dbReference type="GO" id="GO:0004483">
    <property type="term" value="F:mRNA (nucleoside-2'-O-)-methyltransferase activity"/>
    <property type="evidence" value="ECO:0007669"/>
    <property type="project" value="UniProtKB-EC"/>
</dbReference>
<dbReference type="GO" id="GO:0004482">
    <property type="term" value="F:mRNA 5'-cap (guanine-N7-)-methyltransferase activity"/>
    <property type="evidence" value="ECO:0007669"/>
    <property type="project" value="UniProtKB-EC"/>
</dbReference>
<dbReference type="GO" id="GO:0046983">
    <property type="term" value="F:protein dimerization activity"/>
    <property type="evidence" value="ECO:0007669"/>
    <property type="project" value="InterPro"/>
</dbReference>
<dbReference type="GO" id="GO:0003724">
    <property type="term" value="F:RNA helicase activity"/>
    <property type="evidence" value="ECO:0007669"/>
    <property type="project" value="UniProtKB-EC"/>
</dbReference>
<dbReference type="GO" id="GO:0003968">
    <property type="term" value="F:RNA-directed RNA polymerase activity"/>
    <property type="evidence" value="ECO:0007669"/>
    <property type="project" value="UniProtKB-KW"/>
</dbReference>
<dbReference type="GO" id="GO:0004252">
    <property type="term" value="F:serine-type endopeptidase activity"/>
    <property type="evidence" value="ECO:0007669"/>
    <property type="project" value="InterPro"/>
</dbReference>
<dbReference type="GO" id="GO:0005198">
    <property type="term" value="F:structural molecule activity"/>
    <property type="evidence" value="ECO:0007669"/>
    <property type="project" value="InterPro"/>
</dbReference>
<dbReference type="GO" id="GO:0075512">
    <property type="term" value="P:clathrin-dependent endocytosis of virus by host cell"/>
    <property type="evidence" value="ECO:0007669"/>
    <property type="project" value="UniProtKB-KW"/>
</dbReference>
<dbReference type="GO" id="GO:0039654">
    <property type="term" value="P:fusion of virus membrane with host endosome membrane"/>
    <property type="evidence" value="ECO:0007669"/>
    <property type="project" value="UniProtKB-KW"/>
</dbReference>
<dbReference type="GO" id="GO:0034220">
    <property type="term" value="P:monoatomic ion transmembrane transport"/>
    <property type="evidence" value="ECO:0007669"/>
    <property type="project" value="UniProtKB-KW"/>
</dbReference>
<dbReference type="GO" id="GO:0006508">
    <property type="term" value="P:proteolysis"/>
    <property type="evidence" value="ECO:0007669"/>
    <property type="project" value="UniProtKB-KW"/>
</dbReference>
<dbReference type="GO" id="GO:0039520">
    <property type="term" value="P:symbiont-mediated activation of host autophagy"/>
    <property type="evidence" value="ECO:0007669"/>
    <property type="project" value="UniProtKB-KW"/>
</dbReference>
<dbReference type="GO" id="GO:0039545">
    <property type="term" value="P:symbiont-mediated suppression of host cytoplasmic pattern recognition receptor signaling pathway via inhibition of MAVS activity"/>
    <property type="evidence" value="ECO:0007669"/>
    <property type="project" value="UniProtKB-KW"/>
</dbReference>
<dbReference type="GO" id="GO:0039574">
    <property type="term" value="P:symbiont-mediated suppression of host JAK-STAT cascade via inhibition of host TYK2 activity"/>
    <property type="evidence" value="ECO:0007669"/>
    <property type="project" value="UniProtKB-KW"/>
</dbReference>
<dbReference type="GO" id="GO:0039564">
    <property type="term" value="P:symbiont-mediated suppression of host JAK-STAT cascade via inhibition of STAT2 activity"/>
    <property type="evidence" value="ECO:0007669"/>
    <property type="project" value="UniProtKB-KW"/>
</dbReference>
<dbReference type="GO" id="GO:0039502">
    <property type="term" value="P:symbiont-mediated suppression of host type I interferon-mediated signaling pathway"/>
    <property type="evidence" value="ECO:0007669"/>
    <property type="project" value="UniProtKB-KW"/>
</dbReference>
<dbReference type="GO" id="GO:0039694">
    <property type="term" value="P:viral RNA genome replication"/>
    <property type="evidence" value="ECO:0007669"/>
    <property type="project" value="InterPro"/>
</dbReference>
<dbReference type="GO" id="GO:0019062">
    <property type="term" value="P:virion attachment to host cell"/>
    <property type="evidence" value="ECO:0007669"/>
    <property type="project" value="UniProtKB-KW"/>
</dbReference>
<dbReference type="CDD" id="cd20761">
    <property type="entry name" value="capping_2-OMTase_Flaviviridae"/>
    <property type="match status" value="1"/>
</dbReference>
<dbReference type="CDD" id="cd17931">
    <property type="entry name" value="DEXHc_viral_Ns3"/>
    <property type="match status" value="1"/>
</dbReference>
<dbReference type="CDD" id="cd12149">
    <property type="entry name" value="Flavi_E_C"/>
    <property type="match status" value="1"/>
</dbReference>
<dbReference type="CDD" id="cd17038">
    <property type="entry name" value="Flavi_M"/>
    <property type="match status" value="1"/>
</dbReference>
<dbReference type="CDD" id="cd23204">
    <property type="entry name" value="Flavivirus_RdRp"/>
    <property type="match status" value="1"/>
</dbReference>
<dbReference type="CDD" id="cd18806">
    <property type="entry name" value="SF2_C_viral"/>
    <property type="match status" value="1"/>
</dbReference>
<dbReference type="FunFam" id="1.20.1280.260:FF:000001">
    <property type="entry name" value="Envelope glycoprotein"/>
    <property type="match status" value="1"/>
</dbReference>
<dbReference type="FunFam" id="2.60.40.350:FF:000001">
    <property type="entry name" value="Envelope glycoprotein"/>
    <property type="match status" value="1"/>
</dbReference>
<dbReference type="FunFam" id="1.10.10.930:FF:000001">
    <property type="entry name" value="Genome polyprotein"/>
    <property type="match status" value="1"/>
</dbReference>
<dbReference type="FunFam" id="2.60.260.50:FF:000001">
    <property type="entry name" value="Genome polyprotein"/>
    <property type="match status" value="1"/>
</dbReference>
<dbReference type="FunFam" id="3.30.70.2840:FF:000001">
    <property type="entry name" value="Genome polyprotein"/>
    <property type="match status" value="1"/>
</dbReference>
<dbReference type="FunFam" id="3.30.70.2840:FF:000002">
    <property type="entry name" value="Genome polyprotein"/>
    <property type="match status" value="1"/>
</dbReference>
<dbReference type="FunFam" id="3.40.50.150:FF:000105">
    <property type="entry name" value="Genome polyprotein"/>
    <property type="match status" value="1"/>
</dbReference>
<dbReference type="FunFam" id="3.40.50.300:FF:000763">
    <property type="entry name" value="Genome polyprotein"/>
    <property type="match status" value="1"/>
</dbReference>
<dbReference type="Gene3D" id="1.10.10.930">
    <property type="match status" value="1"/>
</dbReference>
<dbReference type="Gene3D" id="1.10.260.90">
    <property type="match status" value="1"/>
</dbReference>
<dbReference type="Gene3D" id="1.20.1280.260">
    <property type="match status" value="1"/>
</dbReference>
<dbReference type="Gene3D" id="2.40.10.120">
    <property type="match status" value="2"/>
</dbReference>
<dbReference type="Gene3D" id="2.60.40.350">
    <property type="match status" value="1"/>
</dbReference>
<dbReference type="Gene3D" id="1.10.8.970">
    <property type="entry name" value="Flavivirus envelope glycoprotein M-like"/>
    <property type="match status" value="1"/>
</dbReference>
<dbReference type="Gene3D" id="2.60.260.50">
    <property type="entry name" value="Flavivirus polyprotein propeptide domain"/>
    <property type="match status" value="1"/>
</dbReference>
<dbReference type="Gene3D" id="3.30.70.2840">
    <property type="entry name" value="Flavivirus RNA-directed RNA polymerase, thumb domain"/>
    <property type="match status" value="3"/>
</dbReference>
<dbReference type="Gene3D" id="3.40.50.300">
    <property type="entry name" value="P-loop containing nucleotide triphosphate hydrolases"/>
    <property type="match status" value="2"/>
</dbReference>
<dbReference type="Gene3D" id="2.60.98.10">
    <property type="entry name" value="Tick-borne Encephalitis virus Glycoprotein, domain 1"/>
    <property type="match status" value="1"/>
</dbReference>
<dbReference type="Gene3D" id="2.40.10.10">
    <property type="entry name" value="Trypsin-like serine proteases"/>
    <property type="match status" value="1"/>
</dbReference>
<dbReference type="Gene3D" id="3.40.50.150">
    <property type="entry name" value="Vaccinia Virus protein VP39"/>
    <property type="match status" value="1"/>
</dbReference>
<dbReference type="Gene3D" id="3.30.67.10">
    <property type="entry name" value="Viral Envelope Glycoprotein, domain 2"/>
    <property type="match status" value="1"/>
</dbReference>
<dbReference type="Gene3D" id="3.30.387.10">
    <property type="entry name" value="Viral Envelope Glycoprotein, domain 3"/>
    <property type="match status" value="1"/>
</dbReference>
<dbReference type="InterPro" id="IPR043502">
    <property type="entry name" value="DNA/RNA_pol_sf"/>
</dbReference>
<dbReference type="InterPro" id="IPR000069">
    <property type="entry name" value="Env_glycoprot_M_flavivir"/>
</dbReference>
<dbReference type="InterPro" id="IPR038302">
    <property type="entry name" value="Env_glycoprot_M_sf_flavivir"/>
</dbReference>
<dbReference type="InterPro" id="IPR013755">
    <property type="entry name" value="Flav_gly_cen_dom_subdom1"/>
</dbReference>
<dbReference type="InterPro" id="IPR001122">
    <property type="entry name" value="Flavi_capsidC"/>
</dbReference>
<dbReference type="InterPro" id="IPR037172">
    <property type="entry name" value="Flavi_capsidC_sf"/>
</dbReference>
<dbReference type="InterPro" id="IPR011492">
    <property type="entry name" value="Flavi_DEAD"/>
</dbReference>
<dbReference type="InterPro" id="IPR027287">
    <property type="entry name" value="Flavi_E_Ig-like"/>
</dbReference>
<dbReference type="InterPro" id="IPR026470">
    <property type="entry name" value="Flavi_E_Stem/Anchor_dom"/>
</dbReference>
<dbReference type="InterPro" id="IPR038345">
    <property type="entry name" value="Flavi_E_Stem/Anchor_dom_sf"/>
</dbReference>
<dbReference type="InterPro" id="IPR011998">
    <property type="entry name" value="Flavi_Glycoprot_E_cen/dimer"/>
</dbReference>
<dbReference type="InterPro" id="IPR001157">
    <property type="entry name" value="Flavi_NS1"/>
</dbReference>
<dbReference type="InterPro" id="IPR000752">
    <property type="entry name" value="Flavi_NS2A"/>
</dbReference>
<dbReference type="InterPro" id="IPR000487">
    <property type="entry name" value="Flavi_NS2B"/>
</dbReference>
<dbReference type="InterPro" id="IPR001850">
    <property type="entry name" value="Flavi_NS3_S7"/>
</dbReference>
<dbReference type="InterPro" id="IPR000404">
    <property type="entry name" value="Flavi_NS4A"/>
</dbReference>
<dbReference type="InterPro" id="IPR001528">
    <property type="entry name" value="Flavi_NS4B"/>
</dbReference>
<dbReference type="InterPro" id="IPR046811">
    <property type="entry name" value="Flavi_NS5_thumb"/>
</dbReference>
<dbReference type="InterPro" id="IPR002535">
    <property type="entry name" value="Flavi_propep"/>
</dbReference>
<dbReference type="InterPro" id="IPR038688">
    <property type="entry name" value="Flavi_propep_sf"/>
</dbReference>
<dbReference type="InterPro" id="IPR047530">
    <property type="entry name" value="Flavi_RdRp"/>
</dbReference>
<dbReference type="InterPro" id="IPR000208">
    <property type="entry name" value="Flavi_RdRp_fingers/palm"/>
</dbReference>
<dbReference type="InterPro" id="IPR000336">
    <property type="entry name" value="Flavivir/Alphavir_Ig-like_sf"/>
</dbReference>
<dbReference type="InterPro" id="IPR014412">
    <property type="entry name" value="Gen_Poly_FLV"/>
</dbReference>
<dbReference type="InterPro" id="IPR036253">
    <property type="entry name" value="Glycoprot_cen/dimer_sf"/>
</dbReference>
<dbReference type="InterPro" id="IPR038055">
    <property type="entry name" value="Glycoprot_E_dimer_dom"/>
</dbReference>
<dbReference type="InterPro" id="IPR013756">
    <property type="entry name" value="GlyE_cen_dom_subdom2"/>
</dbReference>
<dbReference type="InterPro" id="IPR014001">
    <property type="entry name" value="Helicase_ATP-bd"/>
</dbReference>
<dbReference type="InterPro" id="IPR001650">
    <property type="entry name" value="Helicase_C-like"/>
</dbReference>
<dbReference type="InterPro" id="IPR014756">
    <property type="entry name" value="Ig_E-set"/>
</dbReference>
<dbReference type="InterPro" id="IPR026490">
    <property type="entry name" value="mRNA_cap_0/1_MeTrfase"/>
</dbReference>
<dbReference type="InterPro" id="IPR049486">
    <property type="entry name" value="NS3-hel_C_flaviviridae"/>
</dbReference>
<dbReference type="InterPro" id="IPR027417">
    <property type="entry name" value="P-loop_NTPase"/>
</dbReference>
<dbReference type="InterPro" id="IPR009003">
    <property type="entry name" value="Peptidase_S1_PA"/>
</dbReference>
<dbReference type="InterPro" id="IPR043504">
    <property type="entry name" value="Peptidase_S1_PA_chymotrypsin"/>
</dbReference>
<dbReference type="InterPro" id="IPR007094">
    <property type="entry name" value="RNA-dir_pol_PSvirus"/>
</dbReference>
<dbReference type="InterPro" id="IPR002877">
    <property type="entry name" value="RNA_MeTrfase_FtsJ_dom"/>
</dbReference>
<dbReference type="InterPro" id="IPR029063">
    <property type="entry name" value="SAM-dependent_MTases_sf"/>
</dbReference>
<dbReference type="NCBIfam" id="TIGR04240">
    <property type="entry name" value="flavi_E_stem"/>
    <property type="match status" value="1"/>
</dbReference>
<dbReference type="Pfam" id="PF20907">
    <property type="entry name" value="Flav_NS3-hel_C"/>
    <property type="match status" value="1"/>
</dbReference>
<dbReference type="Pfam" id="PF01003">
    <property type="entry name" value="Flavi_capsid"/>
    <property type="match status" value="1"/>
</dbReference>
<dbReference type="Pfam" id="PF07652">
    <property type="entry name" value="Flavi_DEAD"/>
    <property type="match status" value="1"/>
</dbReference>
<dbReference type="Pfam" id="PF21659">
    <property type="entry name" value="Flavi_E_stem"/>
    <property type="match status" value="1"/>
</dbReference>
<dbReference type="Pfam" id="PF02832">
    <property type="entry name" value="Flavi_glycop_C"/>
    <property type="match status" value="1"/>
</dbReference>
<dbReference type="Pfam" id="PF00869">
    <property type="entry name" value="Flavi_glycoprot"/>
    <property type="match status" value="1"/>
</dbReference>
<dbReference type="Pfam" id="PF01004">
    <property type="entry name" value="Flavi_M"/>
    <property type="match status" value="1"/>
</dbReference>
<dbReference type="Pfam" id="PF00948">
    <property type="entry name" value="Flavi_NS1"/>
    <property type="match status" value="1"/>
</dbReference>
<dbReference type="Pfam" id="PF01005">
    <property type="entry name" value="Flavi_NS2A"/>
    <property type="match status" value="1"/>
</dbReference>
<dbReference type="Pfam" id="PF01002">
    <property type="entry name" value="Flavi_NS2B"/>
    <property type="match status" value="1"/>
</dbReference>
<dbReference type="Pfam" id="PF01350">
    <property type="entry name" value="Flavi_NS4A"/>
    <property type="match status" value="1"/>
</dbReference>
<dbReference type="Pfam" id="PF01349">
    <property type="entry name" value="Flavi_NS4B"/>
    <property type="match status" value="1"/>
</dbReference>
<dbReference type="Pfam" id="PF00972">
    <property type="entry name" value="Flavi_NS5"/>
    <property type="match status" value="1"/>
</dbReference>
<dbReference type="Pfam" id="PF20483">
    <property type="entry name" value="Flavi_NS5_thumb"/>
    <property type="match status" value="1"/>
</dbReference>
<dbReference type="Pfam" id="PF01570">
    <property type="entry name" value="Flavi_propep"/>
    <property type="match status" value="1"/>
</dbReference>
<dbReference type="Pfam" id="PF01728">
    <property type="entry name" value="FtsJ"/>
    <property type="match status" value="1"/>
</dbReference>
<dbReference type="Pfam" id="PF00949">
    <property type="entry name" value="Peptidase_S7"/>
    <property type="match status" value="1"/>
</dbReference>
<dbReference type="PIRSF" id="PIRSF003817">
    <property type="entry name" value="Gen_Poly_FLV"/>
    <property type="match status" value="1"/>
</dbReference>
<dbReference type="SMART" id="SM00487">
    <property type="entry name" value="DEXDc"/>
    <property type="match status" value="1"/>
</dbReference>
<dbReference type="SMART" id="SM00490">
    <property type="entry name" value="HELICc"/>
    <property type="match status" value="1"/>
</dbReference>
<dbReference type="SUPFAM" id="SSF56672">
    <property type="entry name" value="DNA/RNA polymerases"/>
    <property type="match status" value="1"/>
</dbReference>
<dbReference type="SUPFAM" id="SSF81296">
    <property type="entry name" value="E set domains"/>
    <property type="match status" value="1"/>
</dbReference>
<dbReference type="SUPFAM" id="SSF101257">
    <property type="entry name" value="Flavivirus capsid protein C"/>
    <property type="match status" value="1"/>
</dbReference>
<dbReference type="SUPFAM" id="SSF52540">
    <property type="entry name" value="P-loop containing nucleoside triphosphate hydrolases"/>
    <property type="match status" value="2"/>
</dbReference>
<dbReference type="SUPFAM" id="SSF53335">
    <property type="entry name" value="S-adenosyl-L-methionine-dependent methyltransferases"/>
    <property type="match status" value="1"/>
</dbReference>
<dbReference type="SUPFAM" id="SSF50494">
    <property type="entry name" value="Trypsin-like serine proteases"/>
    <property type="match status" value="1"/>
</dbReference>
<dbReference type="SUPFAM" id="SSF56983">
    <property type="entry name" value="Viral glycoprotein, central and dimerisation domains"/>
    <property type="match status" value="1"/>
</dbReference>
<dbReference type="PROSITE" id="PS51527">
    <property type="entry name" value="FLAVIVIRUS_NS2B"/>
    <property type="match status" value="1"/>
</dbReference>
<dbReference type="PROSITE" id="PS51528">
    <property type="entry name" value="FLAVIVIRUS_NS3PRO"/>
    <property type="match status" value="1"/>
</dbReference>
<dbReference type="PROSITE" id="PS51192">
    <property type="entry name" value="HELICASE_ATP_BIND_1"/>
    <property type="match status" value="1"/>
</dbReference>
<dbReference type="PROSITE" id="PS51194">
    <property type="entry name" value="HELICASE_CTER"/>
    <property type="match status" value="1"/>
</dbReference>
<dbReference type="PROSITE" id="PS50507">
    <property type="entry name" value="RDRP_SSRNA_POS"/>
    <property type="match status" value="1"/>
</dbReference>
<dbReference type="PROSITE" id="PS51591">
    <property type="entry name" value="RNA_CAP01_NS5_MT"/>
    <property type="match status" value="1"/>
</dbReference>
<feature type="chain" id="PRO_0000405203" description="Genome polyprotein">
    <location>
        <begin position="1"/>
        <end position="3392"/>
    </location>
</feature>
<feature type="chain" id="PRO_0000264634" description="Protein C" evidence="2">
    <location>
        <begin position="1"/>
        <end position="100"/>
    </location>
</feature>
<feature type="propeptide" id="PRO_0000264635" description="ER anchor for the protein C, removed in mature form by serine protease NS3">
    <location>
        <begin position="101"/>
        <end position="114"/>
    </location>
</feature>
<feature type="chain" id="PRO_0000264636" description="Protein prM" evidence="2">
    <location>
        <begin position="115"/>
        <end position="280"/>
    </location>
</feature>
<feature type="chain" id="PRO_0000264637" description="Peptide pr" evidence="2">
    <location>
        <begin position="115"/>
        <end position="205"/>
    </location>
</feature>
<feature type="chain" id="PRO_0000264638" description="Small envelope protein M" evidence="2">
    <location>
        <begin position="206"/>
        <end position="280"/>
    </location>
</feature>
<feature type="chain" id="PRO_0000264639" description="Envelope protein E" evidence="2">
    <location>
        <begin position="281"/>
        <end position="775"/>
    </location>
</feature>
<feature type="chain" id="PRO_0000264640" description="Non-structural protein 1" evidence="2">
    <location>
        <begin position="776"/>
        <end position="1127"/>
    </location>
</feature>
<feature type="chain" id="PRO_0000264641" description="Non-structural protein 2A" evidence="2">
    <location>
        <begin position="1128"/>
        <end position="1345"/>
    </location>
</feature>
<feature type="chain" id="PRO_0000264642" description="Non-structural protein 2A-alpha" evidence="2">
    <location>
        <begin position="1128"/>
        <end position="1315"/>
    </location>
</feature>
<feature type="chain" id="PRO_0000264643" description="Serine protease subunit NS2B" evidence="2">
    <location>
        <begin position="1346"/>
        <end position="1475"/>
    </location>
</feature>
<feature type="chain" id="PRO_0000264644" description="Serine protease NS3" evidence="2">
    <location>
        <begin position="1476"/>
        <end position="2094"/>
    </location>
</feature>
<feature type="chain" id="PRO_0000264645" description="Non-structural protein 4A" evidence="2">
    <location>
        <begin position="2095"/>
        <end position="2221"/>
    </location>
</feature>
<feature type="peptide" id="PRO_0000264646" description="Peptide 2k">
    <location>
        <begin position="2222"/>
        <end position="2244"/>
    </location>
</feature>
<feature type="chain" id="PRO_0000264647" description="Non-structural protein 4B" evidence="2">
    <location>
        <begin position="2245"/>
        <end position="2493"/>
    </location>
</feature>
<feature type="chain" id="PRO_0000264648" description="RNA-directed RNA polymerase NS5" evidence="2">
    <location>
        <begin position="2494"/>
        <end position="3392"/>
    </location>
</feature>
<feature type="topological domain" description="Cytoplasmic" evidence="6">
    <location>
        <begin position="1"/>
        <end position="101"/>
    </location>
</feature>
<feature type="transmembrane region" description="Helical" evidence="6">
    <location>
        <begin position="102"/>
        <end position="119"/>
    </location>
</feature>
<feature type="topological domain" description="Extracellular" evidence="6">
    <location>
        <begin position="120"/>
        <end position="242"/>
    </location>
</feature>
<feature type="transmembrane region" description="Helical" evidence="6">
    <location>
        <begin position="243"/>
        <end position="260"/>
    </location>
</feature>
<feature type="topological domain" description="Cytoplasmic" evidence="6">
    <location>
        <position position="261"/>
    </location>
</feature>
<feature type="transmembrane region" description="Helical" evidence="6">
    <location>
        <begin position="262"/>
        <end position="280"/>
    </location>
</feature>
<feature type="topological domain" description="Extracellular" evidence="6">
    <location>
        <begin position="281"/>
        <end position="725"/>
    </location>
</feature>
<feature type="intramembrane region" description="Helical" evidence="6">
    <location>
        <begin position="726"/>
        <end position="746"/>
    </location>
</feature>
<feature type="topological domain" description="Extracellular" evidence="6">
    <location>
        <begin position="747"/>
        <end position="752"/>
    </location>
</feature>
<feature type="intramembrane region" description="Helical" evidence="6">
    <location>
        <begin position="753"/>
        <end position="775"/>
    </location>
</feature>
<feature type="topological domain" description="Extracellular" evidence="6">
    <location>
        <begin position="776"/>
        <end position="1125"/>
    </location>
</feature>
<feature type="transmembrane region" description="Helical" evidence="6">
    <location>
        <begin position="1126"/>
        <end position="1146"/>
    </location>
</feature>
<feature type="topological domain" description="Cytoplasmic" evidence="6">
    <location>
        <begin position="1147"/>
        <end position="1157"/>
    </location>
</feature>
<feature type="transmembrane region" description="Helical" evidence="6">
    <location>
        <begin position="1158"/>
        <end position="1178"/>
    </location>
</feature>
<feature type="topological domain" description="Lumenal" evidence="6">
    <location>
        <begin position="1179"/>
        <end position="1199"/>
    </location>
</feature>
<feature type="transmembrane region" description="Helical" evidence="6">
    <location>
        <begin position="1200"/>
        <end position="1220"/>
    </location>
</feature>
<feature type="topological domain" description="Cytoplasmic" evidence="6">
    <location>
        <begin position="1221"/>
        <end position="1289"/>
    </location>
</feature>
<feature type="transmembrane region" description="Helical" evidence="6">
    <location>
        <begin position="1290"/>
        <end position="1310"/>
    </location>
</feature>
<feature type="topological domain" description="Lumenal" evidence="6">
    <location>
        <begin position="1311"/>
        <end position="1315"/>
    </location>
</feature>
<feature type="transmembrane region" description="Helical" evidence="6">
    <location>
        <begin position="1316"/>
        <end position="1336"/>
    </location>
</feature>
<feature type="topological domain" description="Cytoplasmic" evidence="6">
    <location>
        <begin position="1337"/>
        <end position="1346"/>
    </location>
</feature>
<feature type="transmembrane region" description="Helical" evidence="6">
    <location>
        <begin position="1347"/>
        <end position="1367"/>
    </location>
</feature>
<feature type="topological domain" description="Lumenal" evidence="6">
    <location>
        <begin position="1368"/>
        <end position="1370"/>
    </location>
</feature>
<feature type="transmembrane region" description="Helical" evidence="6">
    <location>
        <begin position="1371"/>
        <end position="1391"/>
    </location>
</feature>
<feature type="topological domain" description="Cytoplasmic" evidence="6">
    <location>
        <begin position="1392"/>
        <end position="1447"/>
    </location>
</feature>
<feature type="intramembrane region" description="Helical" evidence="6">
    <location>
        <begin position="1448"/>
        <end position="1468"/>
    </location>
</feature>
<feature type="topological domain" description="Cytoplasmic" evidence="6">
    <location>
        <begin position="1469"/>
        <end position="2148"/>
    </location>
</feature>
<feature type="transmembrane region" description="Helical" evidence="6">
    <location>
        <begin position="2149"/>
        <end position="2169"/>
    </location>
</feature>
<feature type="topological domain" description="Lumenal" evidence="6">
    <location>
        <begin position="2170"/>
        <end position="2171"/>
    </location>
</feature>
<feature type="intramembrane region" description="Helical" evidence="6">
    <location>
        <begin position="2172"/>
        <end position="2192"/>
    </location>
</feature>
<feature type="topological domain" description="Lumenal" evidence="6">
    <location>
        <position position="2193"/>
    </location>
</feature>
<feature type="transmembrane region" description="Helical" evidence="6">
    <location>
        <begin position="2194"/>
        <end position="2214"/>
    </location>
</feature>
<feature type="topological domain" description="Cytoplasmic" evidence="6">
    <location>
        <begin position="2215"/>
        <end position="2229"/>
    </location>
</feature>
<feature type="transmembrane region" description="Helical; Note=Signal for NS4B" evidence="6">
    <location>
        <begin position="2230"/>
        <end position="2250"/>
    </location>
</feature>
<feature type="topological domain" description="Lumenal" evidence="6">
    <location>
        <begin position="2251"/>
        <end position="2276"/>
    </location>
</feature>
<feature type="intramembrane region" description="Helical" evidence="6">
    <location>
        <begin position="2277"/>
        <end position="2297"/>
    </location>
</feature>
<feature type="topological domain" description="Lumenal" evidence="6">
    <location>
        <begin position="2298"/>
        <end position="2349"/>
    </location>
</feature>
<feature type="transmembrane region" description="Helical" evidence="6">
    <location>
        <begin position="2350"/>
        <end position="2370"/>
    </location>
</feature>
<feature type="topological domain" description="Cytoplasmic" evidence="6">
    <location>
        <begin position="2371"/>
        <end position="2415"/>
    </location>
</feature>
<feature type="transmembrane region" description="Helical" evidence="6">
    <location>
        <begin position="2416"/>
        <end position="2436"/>
    </location>
</feature>
<feature type="topological domain" description="Lumenal" evidence="6">
    <location>
        <begin position="2437"/>
        <end position="2461"/>
    </location>
</feature>
<feature type="transmembrane region" description="Helical" evidence="6">
    <location>
        <begin position="2462"/>
        <end position="2482"/>
    </location>
</feature>
<feature type="topological domain" description="Cytoplasmic" evidence="6">
    <location>
        <begin position="2483"/>
        <end position="3392"/>
    </location>
</feature>
<feature type="domain" description="Peptidase S7" evidence="12">
    <location>
        <begin position="1476"/>
        <end position="1653"/>
    </location>
</feature>
<feature type="domain" description="Helicase ATP-binding" evidence="9">
    <location>
        <begin position="1656"/>
        <end position="1812"/>
    </location>
</feature>
<feature type="domain" description="Helicase C-terminal" evidence="10">
    <location>
        <begin position="1822"/>
        <end position="1989"/>
    </location>
</feature>
<feature type="domain" description="mRNA cap 0-1 NS5-type MT" evidence="13">
    <location>
        <begin position="2495"/>
        <end position="2756"/>
    </location>
</feature>
<feature type="domain" description="RdRp catalytic" evidence="8">
    <location>
        <begin position="3021"/>
        <end position="3170"/>
    </location>
</feature>
<feature type="region of interest" description="Hydrophobic; homodimerization of capsid protein C" evidence="1">
    <location>
        <begin position="33"/>
        <end position="74"/>
    </location>
</feature>
<feature type="region of interest" description="Interacts with and activates NS3 protease" evidence="11">
    <location>
        <begin position="1398"/>
        <end position="1437"/>
    </location>
</feature>
<feature type="short sequence motif" description="DEAH box">
    <location>
        <begin position="1760"/>
        <end position="1763"/>
    </location>
</feature>
<feature type="active site" description="Charge relay system; for serine protease NS3 activity" evidence="12">
    <location>
        <position position="1526"/>
    </location>
</feature>
<feature type="active site" description="Charge relay system; for serine protease NS3 activity" evidence="12">
    <location>
        <position position="1550"/>
    </location>
</feature>
<feature type="active site" description="Charge relay system; for serine protease NS3 activity" evidence="12">
    <location>
        <position position="1610"/>
    </location>
</feature>
<feature type="binding site" evidence="9">
    <location>
        <begin position="1669"/>
        <end position="1676"/>
    </location>
    <ligand>
        <name>ATP</name>
        <dbReference type="ChEBI" id="CHEBI:30616"/>
    </ligand>
</feature>
<feature type="binding site" evidence="13">
    <location>
        <position position="2549"/>
    </location>
    <ligand>
        <name>S-adenosyl-L-methionine</name>
        <dbReference type="ChEBI" id="CHEBI:59789"/>
    </ligand>
</feature>
<feature type="binding site" evidence="13">
    <location>
        <position position="2579"/>
    </location>
    <ligand>
        <name>S-adenosyl-L-methionine</name>
        <dbReference type="ChEBI" id="CHEBI:59789"/>
    </ligand>
</feature>
<feature type="binding site" evidence="13">
    <location>
        <position position="2580"/>
    </location>
    <ligand>
        <name>S-adenosyl-L-methionine</name>
        <dbReference type="ChEBI" id="CHEBI:59789"/>
    </ligand>
</feature>
<feature type="binding site" evidence="13">
    <location>
        <position position="2597"/>
    </location>
    <ligand>
        <name>S-adenosyl-L-methionine</name>
        <dbReference type="ChEBI" id="CHEBI:59789"/>
    </ligand>
</feature>
<feature type="binding site" evidence="13">
    <location>
        <position position="2598"/>
    </location>
    <ligand>
        <name>S-adenosyl-L-methionine</name>
        <dbReference type="ChEBI" id="CHEBI:59789"/>
    </ligand>
</feature>
<feature type="binding site" evidence="13">
    <location>
        <position position="2624"/>
    </location>
    <ligand>
        <name>S-adenosyl-L-methionine</name>
        <dbReference type="ChEBI" id="CHEBI:59789"/>
    </ligand>
</feature>
<feature type="binding site" evidence="13">
    <location>
        <position position="2625"/>
    </location>
    <ligand>
        <name>S-adenosyl-L-methionine</name>
        <dbReference type="ChEBI" id="CHEBI:59789"/>
    </ligand>
</feature>
<feature type="binding site" evidence="13">
    <location>
        <position position="2640"/>
    </location>
    <ligand>
        <name>S-adenosyl-L-methionine</name>
        <dbReference type="ChEBI" id="CHEBI:59789"/>
    </ligand>
</feature>
<feature type="binding site" evidence="13">
    <location>
        <position position="2711"/>
    </location>
    <ligand>
        <name>S-adenosyl-L-methionine</name>
        <dbReference type="ChEBI" id="CHEBI:59789"/>
    </ligand>
</feature>
<feature type="site" description="Cleavage; by viral protease NS3" evidence="6">
    <location>
        <begin position="100"/>
        <end position="101"/>
    </location>
</feature>
<feature type="site" description="Cleavage; by host signal peptidase" evidence="1">
    <location>
        <begin position="114"/>
        <end position="115"/>
    </location>
</feature>
<feature type="site" description="Cleavage; by host furin" evidence="6">
    <location>
        <begin position="205"/>
        <end position="206"/>
    </location>
</feature>
<feature type="site" description="Cleavage; by host signal peptidase" evidence="6">
    <location>
        <begin position="280"/>
        <end position="281"/>
    </location>
</feature>
<feature type="site" description="Cleavage; by host signal peptidase" evidence="6">
    <location>
        <begin position="775"/>
        <end position="776"/>
    </location>
</feature>
<feature type="site" description="Cleavage; by host" evidence="6">
    <location>
        <begin position="1127"/>
        <end position="1128"/>
    </location>
</feature>
<feature type="site" description="Cleavage; by viral protease NS3" evidence="6">
    <location>
        <begin position="1345"/>
        <end position="1346"/>
    </location>
</feature>
<feature type="site" description="Cleavage; by autolysis" evidence="6">
    <location>
        <begin position="1475"/>
        <end position="1476"/>
    </location>
</feature>
<feature type="site" description="Cleavage; by autolysis" evidence="6">
    <location>
        <begin position="2094"/>
        <end position="2095"/>
    </location>
</feature>
<feature type="site" description="Cleavage; by viral protease NS3" evidence="6">
    <location>
        <begin position="2221"/>
        <end position="2222"/>
    </location>
</feature>
<feature type="site" description="Cleavage; by host signal peptidase" evidence="6">
    <location>
        <begin position="2244"/>
        <end position="2245"/>
    </location>
</feature>
<feature type="site" description="Cleavage; by viral protease NS3" evidence="6">
    <location>
        <begin position="2493"/>
        <end position="2494"/>
    </location>
</feature>
<feature type="site" description="mRNA cap binding" evidence="13">
    <location>
        <position position="2507"/>
    </location>
</feature>
<feature type="site" description="mRNA cap binding; via carbonyl oxygen" evidence="13">
    <location>
        <position position="2510"/>
    </location>
</feature>
<feature type="site" description="mRNA cap binding" evidence="13">
    <location>
        <position position="2511"/>
    </location>
</feature>
<feature type="site" description="mRNA cap binding; via carbonyl oxygen" evidence="13">
    <location>
        <position position="2513"/>
    </location>
</feature>
<feature type="site" description="mRNA cap binding" evidence="13">
    <location>
        <position position="2518"/>
    </location>
</feature>
<feature type="site" description="mRNA cap binding" evidence="13">
    <location>
        <position position="2522"/>
    </location>
</feature>
<feature type="site" description="Essential for 2'-O-methyltransferase activity" evidence="13">
    <location>
        <position position="2554"/>
    </location>
</feature>
<feature type="site" description="Essential for 2'-O-methyltransferase and N-7 methyltransferase activity" evidence="13">
    <location>
        <position position="2639"/>
    </location>
</feature>
<feature type="site" description="mRNA cap binding" evidence="13">
    <location>
        <position position="2643"/>
    </location>
</feature>
<feature type="site" description="Essential for 2'-O-methyltransferase activity" evidence="13">
    <location>
        <position position="2673"/>
    </location>
</feature>
<feature type="site" description="mRNA cap binding" evidence="13">
    <location>
        <position position="2704"/>
    </location>
</feature>
<feature type="site" description="mRNA cap binding" evidence="13">
    <location>
        <position position="2706"/>
    </location>
</feature>
<feature type="site" description="Essential for 2'-O-methyltransferase activity" evidence="13">
    <location>
        <position position="2709"/>
    </location>
</feature>
<feature type="modified residue" description="N6-acetyllysine; by host" evidence="4">
    <location>
        <position position="1864"/>
    </location>
</feature>
<feature type="glycosylation site" description="N-linked (GlcNAc...) asparagine; by host" evidence="7">
    <location>
        <position position="183"/>
    </location>
</feature>
<feature type="glycosylation site" description="N-linked (GlcNAc...) asparagine; by host" evidence="7">
    <location>
        <position position="347"/>
    </location>
</feature>
<feature type="glycosylation site" description="N-linked (GlcNAc...) asparagine; by host" evidence="7">
    <location>
        <position position="433"/>
    </location>
</feature>
<feature type="glycosylation site" description="N-linked (GlcNAc...) asparagine; by host" evidence="7">
    <location>
        <position position="905"/>
    </location>
</feature>
<feature type="glycosylation site" description="N-linked (GlcNAc...) asparagine; by host" evidence="7">
    <location>
        <position position="982"/>
    </location>
</feature>
<feature type="glycosylation site" description="N-linked (GlcNAc...) asparagine; by host" evidence="7">
    <location>
        <position position="1190"/>
    </location>
</feature>
<feature type="glycosylation site" description="N-linked (GlcNAc...) asparagine; by host" evidence="7">
    <location>
        <position position="2303"/>
    </location>
</feature>
<feature type="glycosylation site" description="N-linked (GlcNAc...) asparagine; by host" evidence="7">
    <location>
        <position position="2307"/>
    </location>
</feature>
<feature type="glycosylation site" description="N-linked (GlcNAc...) asparagine; by host" evidence="7">
    <location>
        <position position="2459"/>
    </location>
</feature>
<feature type="disulfide bond" evidence="2">
    <location>
        <begin position="283"/>
        <end position="310"/>
    </location>
</feature>
<feature type="disulfide bond" evidence="2">
    <location>
        <begin position="340"/>
        <end position="401"/>
    </location>
</feature>
<feature type="disulfide bond" evidence="2">
    <location>
        <begin position="354"/>
        <end position="385"/>
    </location>
</feature>
<feature type="disulfide bond" evidence="2">
    <location>
        <begin position="372"/>
        <end position="396"/>
    </location>
</feature>
<feature type="disulfide bond" evidence="2">
    <location>
        <begin position="465"/>
        <end position="565"/>
    </location>
</feature>
<feature type="disulfide bond" evidence="2">
    <location>
        <begin position="582"/>
        <end position="613"/>
    </location>
</feature>
<feature type="disulfide bond" evidence="2">
    <location>
        <begin position="779"/>
        <end position="790"/>
    </location>
</feature>
<feature type="disulfide bond" evidence="2">
    <location>
        <begin position="830"/>
        <end position="918"/>
    </location>
</feature>
<feature type="disulfide bond" evidence="2">
    <location>
        <begin position="954"/>
        <end position="998"/>
    </location>
</feature>
<feature type="disulfide bond" evidence="2">
    <location>
        <begin position="1055"/>
        <end position="1104"/>
    </location>
</feature>
<feature type="disulfide bond" evidence="2">
    <location>
        <begin position="1066"/>
        <end position="1088"/>
    </location>
</feature>
<feature type="disulfide bond" evidence="2">
    <location>
        <begin position="1087"/>
        <end position="1091"/>
    </location>
</feature>
<feature type="sequence variant" description="In strain: Isolate Thailand/TH-Sman/1958.">
    <original>L</original>
    <variation>I</variation>
    <location>
        <position position="394"/>
    </location>
</feature>
<feature type="sequence variant" description="In strain: Isolate Thailand/TH-Sman/1958.">
    <original>V</original>
    <variation>A</variation>
    <location>
        <position position="402"/>
    </location>
</feature>
<feature type="sequence variant" description="In strain: Isolate Thailand/TH-Sman/1958.">
    <original>I</original>
    <variation>T</variation>
    <location>
        <position position="441"/>
    </location>
</feature>
<feature type="sequence variant" description="In strain: Isolate 924-1.">
    <original>EM</original>
    <variation>RV</variation>
    <location>
        <begin position="475"/>
        <end position="476"/>
    </location>
</feature>
<feature type="sequence variant" description="In strain: Isolate 924-1.">
    <original>E</original>
    <variation>K</variation>
    <location>
        <position position="483"/>
    </location>
</feature>
<feature type="sequence variant" description="In strain: Isolate 924-1 and Isolate Thailand/TH-Sman/1958.">
    <original>V</original>
    <variation>A</variation>
    <location>
        <position position="531"/>
    </location>
</feature>
<feature type="sequence variant" description="In strain: Isolate 924-1 and Isolate Thailand/TH-Sman/1958.">
    <original>T</original>
    <variation>M</variation>
    <location>
        <position position="577"/>
    </location>
</feature>
<feature type="sequence variant" description="In strain: Isolate 924-1.">
    <original>T</original>
    <variation>S</variation>
    <location>
        <position position="619"/>
    </location>
</feature>
<feature type="sequence variant" description="In strain: Isolate 924-1 and Isolate Thailand/TH-Sman/1958.">
    <original>T</original>
    <variation>E</variation>
    <location>
        <position position="649"/>
    </location>
</feature>
<feature type="sequence variant" description="In strain: Isolate Thailand/TH-Sman/1958n.">
    <original>S</original>
    <variation>I</variation>
    <location>
        <position position="677"/>
    </location>
</feature>
<feature type="sequence variant" description="In strain: Isolate Thailand/TH-Sman/1958.">
    <original>V</original>
    <variation>M</variation>
    <location>
        <position position="712"/>
    </location>
</feature>
<feature type="sequence variant" description="In strain: Isolate 924-1.">
    <original>V</original>
    <variation>I</variation>
    <location>
        <position position="716"/>
    </location>
</feature>
<feature type="sequence variant" description="In strain: Isolate 924-1.">
    <original>V</original>
    <variation>I</variation>
    <location>
        <position position="719"/>
    </location>
</feature>
<feature type="sequence variant" description="In strain: Isolate Thailand/TH-Sman/1958.">
    <original>S</original>
    <variation>N</variation>
    <location>
        <position position="752"/>
    </location>
</feature>
<feature type="sequence variant" description="In strain: Isolate Thailand/TH-Sman/1958.">
    <original>T</original>
    <variation>M</variation>
    <location>
        <position position="758"/>
    </location>
</feature>
<feature type="strand" evidence="14">
    <location>
        <begin position="586"/>
        <end position="590"/>
    </location>
</feature>
<feature type="strand" evidence="14">
    <location>
        <begin position="600"/>
        <end position="606"/>
    </location>
</feature>
<feature type="strand" evidence="14">
    <location>
        <begin position="612"/>
        <end position="614"/>
    </location>
</feature>
<feature type="strand" evidence="14">
    <location>
        <begin position="617"/>
        <end position="621"/>
    </location>
</feature>
<feature type="strand" evidence="14">
    <location>
        <begin position="633"/>
        <end position="635"/>
    </location>
</feature>
<feature type="strand" evidence="14">
    <location>
        <begin position="637"/>
        <end position="639"/>
    </location>
</feature>
<feature type="strand" evidence="14">
    <location>
        <begin position="645"/>
        <end position="649"/>
    </location>
</feature>
<feature type="strand" evidence="14">
    <location>
        <begin position="653"/>
        <end position="663"/>
    </location>
</feature>
<feature type="strand" evidence="14">
    <location>
        <begin position="666"/>
        <end position="673"/>
    </location>
</feature>
<accession>P27909</accession>
<accession>P29983</accession>
<accession>Q8B648</accession>
<keyword id="KW-0002">3D-structure</keyword>
<keyword id="KW-0007">Acetylation</keyword>
<keyword id="KW-1072">Activation of host autophagy by virus</keyword>
<keyword id="KW-0067">ATP-binding</keyword>
<keyword id="KW-0167">Capsid protein</keyword>
<keyword id="KW-1165">Clathrin-mediated endocytosis of virus by host</keyword>
<keyword id="KW-0165">Cleavage on pair of basic residues</keyword>
<keyword id="KW-1015">Disulfide bond</keyword>
<keyword id="KW-1170">Fusion of virus membrane with host endosomal membrane</keyword>
<keyword id="KW-1168">Fusion of virus membrane with host membrane</keyword>
<keyword id="KW-0325">Glycoprotein</keyword>
<keyword id="KW-0347">Helicase</keyword>
<keyword id="KW-1038">Host endoplasmic reticulum</keyword>
<keyword id="KW-1043">Host membrane</keyword>
<keyword id="KW-1045">Host mitochondrion</keyword>
<keyword id="KW-1048">Host nucleus</keyword>
<keyword id="KW-0945">Host-virus interaction</keyword>
<keyword id="KW-0378">Hydrolase</keyword>
<keyword id="KW-1090">Inhibition of host innate immune response by virus</keyword>
<keyword id="KW-1114">Inhibition of host interferon signaling pathway by virus</keyword>
<keyword id="KW-1097">Inhibition of host MAVS by virus</keyword>
<keyword id="KW-1113">Inhibition of host RLR pathway by virus</keyword>
<keyword id="KW-1106">Inhibition of host STAT2 by virus</keyword>
<keyword id="KW-1112">Inhibition of host TYK2 by virus</keyword>
<keyword id="KW-0922">Interferon antiviral system evasion</keyword>
<keyword id="KW-0407">Ion channel</keyword>
<keyword id="KW-0406">Ion transport</keyword>
<keyword id="KW-0472">Membrane</keyword>
<keyword id="KW-0479">Metal-binding</keyword>
<keyword id="KW-0489">Methyltransferase</keyword>
<keyword id="KW-0506">mRNA capping</keyword>
<keyword id="KW-0507">mRNA processing</keyword>
<keyword id="KW-0511">Multifunctional enzyme</keyword>
<keyword id="KW-0547">Nucleotide-binding</keyword>
<keyword id="KW-0548">Nucleotidyltransferase</keyword>
<keyword id="KW-0597">Phosphoprotein</keyword>
<keyword id="KW-0645">Protease</keyword>
<keyword id="KW-0694">RNA-binding</keyword>
<keyword id="KW-0696">RNA-directed RNA polymerase</keyword>
<keyword id="KW-0949">S-adenosyl-L-methionine</keyword>
<keyword id="KW-0964">Secreted</keyword>
<keyword id="KW-0720">Serine protease</keyword>
<keyword id="KW-0804">Transcription</keyword>
<keyword id="KW-0805">Transcription regulation</keyword>
<keyword id="KW-0808">Transferase</keyword>
<keyword id="KW-0812">Transmembrane</keyword>
<keyword id="KW-1133">Transmembrane helix</keyword>
<keyword id="KW-0813">Transport</keyword>
<keyword id="KW-1161">Viral attachment to host cell</keyword>
<keyword id="KW-0261">Viral envelope protein</keyword>
<keyword id="KW-0899">Viral immunoevasion</keyword>
<keyword id="KW-1182">Viral ion channel</keyword>
<keyword id="KW-1162">Viral penetration into host cytoplasm</keyword>
<keyword id="KW-0693">Viral RNA replication</keyword>
<keyword id="KW-0946">Virion</keyword>
<keyword id="KW-1164">Virus endocytosis by host</keyword>
<keyword id="KW-1160">Virus entry into host cell</keyword>
<name>POLG_DEN1B</name>
<sequence length="3392" mass="378905">MNNQRKKTGRPSFNMLKRARNRVSTGSQLAKRFSKGLLSGQGPMKLVMAFIAFLRFLAIPPTAGILARWSSFKKNGAIKVLRGFKKEISSMLNIMNRRKRSVTMLLMLLPTALAFHLTTRGGEPHMIVSKQERGKSLLFKTSAGVNMCTLIAMDLGELCEDTMTYKCPRITEAEPDDVDCWCNATDTWVTYGTCSQTGEHRRDKRSVALAPHVGLGLETRTETWMSSEGAWKQIQKVETWALRHPGFTVIALFLAHAIGTSITQKGIIFILLMLVTPSMAMRCVGIGNRDFVEGLSGATWVDVVLEHGSCVTTMAKNKPTLDIELLKTEVTNPAVLRKLCIEAKISNTTTDSRCPTQGEATLVEEQDANFVCRRTFVDRGWGNGCGLFGKGSLLTCAKFKCVTKLEGKIVQYENLKYSVIVTVHTGDQHQVGNETTEHGTIATITPQAPTSEIQLTDYGALTLDCSPRTGLDFNEMVLLTMKEKSWLVHKQWFLDLPLPWTSGASTSQETWNRQDLLVTFKTAHAKKQEVVVLGSQEGAMHTALTGATEIQTSGTTTIFAGHLKCRLKMDKLTLKGTSYVMCTGSFKLEKEVAETQHGTVLVQVKYEGTDAPCKIPFSTQDEKGVTQNGRLITANPIVTDKEKPVNIETEPPFGESYIVVGAGEKALKLSWFKKGSSIGKMFEATARGARRMAILGDTAWDFGSIGGVFTSVGKLVHQVFGTAYGVLFSGVSWTMKIGIGILLTWLGLNSRSTSLSMTCIAVGMVTLYLGVMVQADSGCVINWKGRELKCGSGIFVTNEVHTWTEQYKFQADSPKRLSAAIGRAWEEGVCGIRSATRLENIMWKQISNELNHILLENDIKFTVVVGNANGILAQGKKMIRPQPMEHKYSWKSWGKAKIIGADIQNTTFIIDGPDTPECPDEQRAWNIWEVEDYGFGIFTTNIWLKLRDSYTQMCDHRLMSAAIKDSKAVHADMGYWIESEKNETWKLARASFIEVKTCIWPKSHTLWSNGVLESEMIIPKMYGGPISQHNYRPGYFTQTAGPWHLGKLELDFDLCEGTTVVVDEHCGSRGPSLRTTTVTGKIIHEWCCRSCTLPPLRFRGEDGCWYGMEIRPVKEKEENLVRSMVSAGSGEVDSFSLGILCVSIMIEEVMRSRWSRKMLMTGTLAVFLLLIMGQLTWNDLIRLCIMVGANASDKMGMGTTYLALMATFKMRPMFAVGLLFRRLTSREVLLLTIGLSLVASVELPNSLEELGDGLAMGIMMLKLLTEFQPHQLWTTLLSLTFIKTTLSLDYAWKTTAMVLSIVSLFPLCLSTTSQKTTWLPVLLGSFGCKPLTMFLITENEIWGRKSWPLNEGIMAIGIVSILLSSLLKNDVPLAGPLIAGGMLIACYVISGSSADLSLEKAAEVSWEEEAEHSGTSHNILVEVQDDGTMKIKDEERDDTLTILLKATLLAVSGVYPMSIPATLFVWYFWQKKKQRSGVLWDTPSPPEVERAVLDDGIYRILQRGLLGRSQVGVGVFQDGVFHTMWHVTRGAVLMYQGKRLEPSWASVKKDLISYGGGWRFQGSWNTGEEVQVIAVEPGKNPKNVQTTPGTFKTPEGEVGAIALDFKPGTSGSPIVNREGKIVGLYGNGVVTTSGTYVSAIAQAKASQEGPLPEIEDEVFKKRNLTIMDLHPGSGKTRRYLPAIVREAIKRKLRTLILAPTRVVASEMAEALKGMPIRYQTTAVKSEHTGREIVDLMCHATFTMRLLSPVRVPNYNMIIMDEAHFTDPASIAARGYISTRVGMGEAAAIFMTATPPGSVEAFPQSNAVIQDEERDIPERSWNSGYDWITDFPGKTVWFVPSIKSGNDIANCLRKNGKRVIQLSRKTFDTEYQKTKNNDWDYVVTTDISEMGANFRADRVIDPRRCLKPVILKDGPERVILAGPMPVTVASAAQRRGRIGRNQNKEGDQYVYMGQPLNNDEDHAHWTEAKMLLDNINTPEGIIPALFEPEREKSAAIDGEYRLRGEARKTFVELMRRGDLPVWLSYKVASEGFQYSDRRWCFDGERNNQVLEENMDVEIWTKEGERKKLRPRWLDARTYSDPLALREFKEFAAGRRSVSGDLILEIGKLPQHLTLRAQNALDNLVMLHNSEQGGKAYRHAMEELPDTIETLMLLALIAVLTGGVTLFFLSGKGLGKTSIGLLCVTASSALLWMASVEPHWIAASIILEFFLMVLLIPEPDRQRTPQDNQLAYVVIGLLFMILTVAANEMGLLETTKKDLGIGHVAAENHQHATILDVDLHPASAWTLYAVATTVITPMMRHTIENTTANISLTAIANQAAILMGLDKGWPISKMDLGVPLLALGCYSQVNPLTLTAAVLMLVAHYAIIGPGLQAKATREAQKRTAAGIMKNPTVDGIVAIDLDPVVYDAKFEKQLGQIMLLILCTSQILLMRTTWALCESITLATGPLTTLWEGSPGKFWNTTIAVSMANIFRGSYLAGAGLAFSLMKSLGGGRRGTGAQGETLGEKWKRQLNQLSKSEFNTYKRSGIMEVDRSEAKEGLKRGETTKHAVSRGTAKLRWFVERNLVKPEGKVIDLGCGRGGWSYYCAGLKKVTEVKGYTKGGPGHEEPIPMATYGWNLVKLHSGKDVFFMPPEKCDTLLCDIGESSPNPTIEEGRTLRVLKMVEPWLRGNQFCIKILNPYMPSVVETLEQMQRKHGGMLVRNPLSRNSTHEMYWVSCGTGNIVSAVNMTSRMLLNRFTMAHRKPTYERDVDLGAGTRHVAVEPEVANLDIIGQRIENIKNEHKSTWHYDEDNPYKTWAYHGSYEVKPSGSASSMVNGVVRLLTKPWDVIPMVTQIAMTDTTPFGQQRVFKEKVDTRTPRAKRGTAQIMEVTAKWLWGFLSRNKKPRICTREEFTRKVRSNAAIGAVFVDENQWNSAKEAVEDERFWDLVHRERELHKQGKCATCVYNMMGKREKKLGEFGKAKGSRAIWYMWLGARFLEFEALGFMNEDHWFSRENSLSGVEGEGLHKLGYILRDISKIPGGNMYADDTAGWDTRITEDDLQNEAKITDIMEPEHALLATSIFKLTYQNKVVRVQRPAKNGTVMDVISRRDQRGSGQVGTYGLNTFTNMEVQLIRQMESEGIFFPSELESPNLAERVLDWLEKHGAERLKRMAISGDDCVVKPIDDRFATALIALNDMGKVRKDIPQWEPSKGWNDWQQVPFCSHHFHQLIMKDGREIVVPCRNQDELVGRARVSQGAGWSLRETACLGKSYAQMWQLMYFHRRDLRLAANAICSAVPVDWVPTSRTTWSIHAHHQWMTTEDMLSVWNRVWIEENPWMEDKTHVSSWEEVPYLGKREDQWCGSLIGLTARATWATNIQVAINQVRRLIGNENYLDYMTSMKRFKNESDPEGALW</sequence>
<proteinExistence type="evidence at protein level"/>
<evidence type="ECO:0000250" key="1"/>
<evidence type="ECO:0000250" key="2">
    <source>
        <dbReference type="UniProtKB" id="P17763"/>
    </source>
</evidence>
<evidence type="ECO:0000250" key="3">
    <source>
        <dbReference type="UniProtKB" id="P29991"/>
    </source>
</evidence>
<evidence type="ECO:0000250" key="4">
    <source>
        <dbReference type="UniProtKB" id="Q32ZE1"/>
    </source>
</evidence>
<evidence type="ECO:0000250" key="5">
    <source>
        <dbReference type="UniProtKB" id="Q9Q6P4"/>
    </source>
</evidence>
<evidence type="ECO:0000255" key="6"/>
<evidence type="ECO:0000255" key="7">
    <source>
        <dbReference type="PROSITE-ProRule" id="PRU00498"/>
    </source>
</evidence>
<evidence type="ECO:0000255" key="8">
    <source>
        <dbReference type="PROSITE-ProRule" id="PRU00539"/>
    </source>
</evidence>
<evidence type="ECO:0000255" key="9">
    <source>
        <dbReference type="PROSITE-ProRule" id="PRU00541"/>
    </source>
</evidence>
<evidence type="ECO:0000255" key="10">
    <source>
        <dbReference type="PROSITE-ProRule" id="PRU00542"/>
    </source>
</evidence>
<evidence type="ECO:0000255" key="11">
    <source>
        <dbReference type="PROSITE-ProRule" id="PRU00859"/>
    </source>
</evidence>
<evidence type="ECO:0000255" key="12">
    <source>
        <dbReference type="PROSITE-ProRule" id="PRU00860"/>
    </source>
</evidence>
<evidence type="ECO:0000255" key="13">
    <source>
        <dbReference type="PROSITE-ProRule" id="PRU00924"/>
    </source>
</evidence>
<evidence type="ECO:0007829" key="14">
    <source>
        <dbReference type="PDB" id="3UZQ"/>
    </source>
</evidence>
<comment type="function">
    <molecule>Protein C</molecule>
    <text evidence="2">Plays a role in virus budding by binding to membrane and gathering the viral RNA into a nucleocapsid that forms the core of a mature virus particle. During virus entry, may induce genome penetration in host cytoplasm after hemifusion induced by surface proteins. Can migrate tot cell nucleus where it modulates host functions.</text>
</comment>
<comment type="function">
    <molecule>Peptide pr</molecule>
    <text evidence="2">Prevents premature fusion activity of envelope proteins in trans Golgi by binding to envelope protein E at pH6.0. After virion release in extracellular space gets dissociated from E dimers.</text>
</comment>
<comment type="function">
    <molecule>Protein prM</molecule>
    <text evidence="2">Acts as a chaperone for envelope protein E during intracellular virion assembly by masking and inactivating envelope protein E fusion peptide. prM is the only viral peptide matured by host furin in the trans-Golgi network. Presumably to avoid catastrophic activation of the viral fusion activity in acidic GolGi compartment prior to virion release. prM-E cleavage is ineficient, and many virions are only partially matured. These uncleaved prM would play a role in immune evasion.</text>
</comment>
<comment type="function">
    <molecule>Small envelope protein M</molecule>
    <text evidence="2">May play a role in virus budding. Exerts cytotoxic effects by activating a mitochondrial apoptotic pathway through M extodomain. May display a viroporin activity.</text>
</comment>
<comment type="function">
    <molecule>Envelope protein E</molecule>
    <text evidence="2">Binds to host cell surface receptor and mediates fusion between viral and cellular membranes. Envelope protein is synthesized in the endoplasmic reticulum in the form of heterodimer with protein prM. They play a role in virion budding in the ER, and the newly formed immature particle is covered with 60 spikes composed of heterodimer between precursor prM and envelope protein E. The virion is transported to the Golgi apparatus where the low pH causes dissociation of PrM-E heterodimers and formation of E homodimers. prM-E cleavage is ineficient, and many virions are only partially matured. These uncleaved prM would play a role in immune evasion.</text>
</comment>
<comment type="function">
    <molecule>Non-structural protein 1</molecule>
    <text evidence="2">Involved in immune evasion, pathogenesis and viral replication. Once cleaved off the polyprotein, is targeted to three destinations: the viral replication cycle, the plasma membrane and the extracellular compartment. May play a role in viral genome replication. Assist membrane bending and envelopment of genomic RNA at the endoplasmic reticulum. Excreted as a hexameric lipoparticle that plays a role against host immune response.</text>
</comment>
<comment type="function">
    <molecule>Non-structural protein 2A</molecule>
    <text evidence="2">Component of the viral RNA replication complex that functions in virion assembly and antagonizes the host immune response.</text>
</comment>
<comment type="function">
    <molecule>Serine protease subunit NS2B</molecule>
    <text evidence="2 11">Required cofactor for the serine protease function of NS3 (By similarity). May have membrane-destabilizing activity and form viroporins (By similarity).</text>
</comment>
<comment type="function">
    <molecule>Serine protease NS3</molecule>
    <text evidence="12">Displays three enzymatic activities: serine protease, NTPase and RNA helicase. NS3 serine protease, in association with NS2B, performs its autocleavage and cleaves the polyprotein at dibasic sites in the cytoplasm: C-prM, NS2A-NS2B, NS2B-NS3, NS3-NS4A, NS4A-2K and NS4B-NS5. NS3 RNA helicase binds RNA and unwinds dsRNA in the 3' to 5' direction.</text>
</comment>
<comment type="function">
    <molecule>Non-structural protein 4A</molecule>
    <text evidence="2 3 5">Regulates the ATPase activity of the NS3 helicase activity. NS4A allows NS3 helicase to conserve energy during unwinding. Plays a role in the inhibition of the host innate immune response. Interacts with host MAVS and thereby prevents the interaction between RIGI and MAVS. In turn, IFN-beta production is impaired. Interacts with host AUP1 which mediates induction of lipophagy in host cells and facilitates production of virus progeny particles (By similarity).</text>
</comment>
<comment type="function">
    <molecule>Peptide 2k</molecule>
    <text evidence="2">Functions as a signal peptide for NS4B and is required for the interferon antagonism activity of the latter.</text>
</comment>
<comment type="function">
    <molecule>Non-structural protein 4B</molecule>
    <text evidence="2">Inhibits interferon (IFN)-induced host STAT1 phosphorylation and nuclear translocation, thereby preventing the establishment of cellular antiviral state by blocking the IFN-alpha/beta pathway.</text>
</comment>
<comment type="function">
    <molecule>RNA-directed RNA polymerase NS5</molecule>
    <text evidence="2">Replicates the viral (+) and (-) genome, and performs the capping of genomes in the cytoplasm. NS5 methylates viral RNA cap at guanine N-7 and ribose 2'-O positions. Besides its role in RNA genome replication, also prevents the establishment of cellular antiviral state by blocking the interferon-alpha/beta (IFN-alpha/beta) signaling pathway. Inhibits host TYK2 and STAT2 phosphorylation, thereby preventing activation of JAK-STAT signaling pathway.</text>
</comment>
<comment type="catalytic activity">
    <reaction>
        <text>Selective hydrolysis of -Xaa-Xaa-|-Yaa- bonds in which each of the Xaa can be either Arg or Lys and Yaa can be either Ser or Ala.</text>
        <dbReference type="EC" id="3.4.21.91"/>
    </reaction>
</comment>
<comment type="catalytic activity">
    <reaction evidence="8">
        <text>RNA(n) + a ribonucleoside 5'-triphosphate = RNA(n+1) + diphosphate</text>
        <dbReference type="Rhea" id="RHEA:21248"/>
        <dbReference type="Rhea" id="RHEA-COMP:14527"/>
        <dbReference type="Rhea" id="RHEA-COMP:17342"/>
        <dbReference type="ChEBI" id="CHEBI:33019"/>
        <dbReference type="ChEBI" id="CHEBI:61557"/>
        <dbReference type="ChEBI" id="CHEBI:140395"/>
        <dbReference type="EC" id="2.7.7.48"/>
    </reaction>
</comment>
<comment type="catalytic activity">
    <reaction>
        <text>a ribonucleoside 5'-triphosphate + H2O = a ribonucleoside 5'-diphosphate + phosphate + H(+)</text>
        <dbReference type="Rhea" id="RHEA:23680"/>
        <dbReference type="ChEBI" id="CHEBI:15377"/>
        <dbReference type="ChEBI" id="CHEBI:15378"/>
        <dbReference type="ChEBI" id="CHEBI:43474"/>
        <dbReference type="ChEBI" id="CHEBI:57930"/>
        <dbReference type="ChEBI" id="CHEBI:61557"/>
        <dbReference type="EC" id="3.6.1.15"/>
    </reaction>
</comment>
<comment type="catalytic activity">
    <reaction>
        <text>ATP + H2O = ADP + phosphate + H(+)</text>
        <dbReference type="Rhea" id="RHEA:13065"/>
        <dbReference type="ChEBI" id="CHEBI:15377"/>
        <dbReference type="ChEBI" id="CHEBI:15378"/>
        <dbReference type="ChEBI" id="CHEBI:30616"/>
        <dbReference type="ChEBI" id="CHEBI:43474"/>
        <dbReference type="ChEBI" id="CHEBI:456216"/>
        <dbReference type="EC" id="3.6.4.13"/>
    </reaction>
</comment>
<comment type="catalytic activity">
    <molecule>RNA-directed RNA polymerase NS5</molecule>
    <reaction evidence="13">
        <text>a 5'-end (5'-triphosphoguanosine)-ribonucleoside in mRNA + S-adenosyl-L-methionine = a 5'-end (N(7)-methyl 5'-triphosphoguanosine)-ribonucleoside in mRNA + S-adenosyl-L-homocysteine</text>
        <dbReference type="Rhea" id="RHEA:67008"/>
        <dbReference type="Rhea" id="RHEA-COMP:17166"/>
        <dbReference type="Rhea" id="RHEA-COMP:17167"/>
        <dbReference type="ChEBI" id="CHEBI:57856"/>
        <dbReference type="ChEBI" id="CHEBI:59789"/>
        <dbReference type="ChEBI" id="CHEBI:156461"/>
        <dbReference type="ChEBI" id="CHEBI:167617"/>
        <dbReference type="EC" id="2.1.1.56"/>
    </reaction>
</comment>
<comment type="catalytic activity">
    <molecule>RNA-directed RNA polymerase NS5</molecule>
    <reaction evidence="13">
        <text>a 5'-end (N(7)-methyl 5'-triphosphoguanosine)-ribonucleoside in mRNA + S-adenosyl-L-methionine = a 5'-end (N(7)-methyl 5'-triphosphoguanosine)-(2'-O-methyl-ribonucleoside) in mRNA + S-adenosyl-L-homocysteine + H(+)</text>
        <dbReference type="Rhea" id="RHEA:67020"/>
        <dbReference type="Rhea" id="RHEA-COMP:17167"/>
        <dbReference type="Rhea" id="RHEA-COMP:17168"/>
        <dbReference type="ChEBI" id="CHEBI:15378"/>
        <dbReference type="ChEBI" id="CHEBI:57856"/>
        <dbReference type="ChEBI" id="CHEBI:59789"/>
        <dbReference type="ChEBI" id="CHEBI:156461"/>
        <dbReference type="ChEBI" id="CHEBI:167609"/>
        <dbReference type="EC" id="2.1.1.57"/>
    </reaction>
</comment>
<comment type="subunit">
    <text evidence="2">Capsid protein C: Homodimer. Interacts (via N-terminus) with host EXOC1 (via C-terminus); this interaction results in EXOC1 degradation through the proteasome degradation pathway.</text>
</comment>
<comment type="subunit">
    <molecule>Protein prM</molecule>
    <text evidence="2">Forms heterodimers with envelope protein E in the endoplasmic reticulum and Golgi.</text>
</comment>
<comment type="subunit">
    <molecule>Envelope protein E</molecule>
    <text evidence="2">Homodimer; in the endoplasmic reticulum and Golgi. Interacts with protein prM. Interacts with non-structural protein 1.</text>
</comment>
<comment type="subunit">
    <molecule>Non-structural protein 1</molecule>
    <text evidence="2">Homodimer; Homohexamer when secreted. Interacts with envelope protein E.</text>
</comment>
<comment type="subunit">
    <molecule>Non-structural protein 2A</molecule>
    <text evidence="2">Interacts (via N-terminus) with serine protease NS3.</text>
</comment>
<comment type="subunit">
    <molecule>Serine protease subunit NS2B</molecule>
    <text evidence="2">Forms a heterodimer with serine protease NS3. May form homooligomers.</text>
</comment>
<comment type="subunit">
    <molecule>Serine protease NS3</molecule>
    <text evidence="2">Forms a heterodimer with NS2B. Interacts with NS4B. Interacts with unphosphorylated RNA-directed RNA polymerase NS5; this interaction stimulates RNA-directed RNA polymerase NS5 guanylyltransferase activity. Interacts with host SHFL.</text>
</comment>
<comment type="subunit">
    <molecule>Non-structural protein 4A</molecule>
    <text evidence="2 3">Interacts with host MAVS; this interaction inhibits the synthesis of IFN-beta. Interacts with host SHFL. Interacts with host AUP1; the interaction occurs in the presence of Dengue virus NS4B and induces lipophagy which facilitates production of virus progeny particles (By similarity).</text>
</comment>
<comment type="subunit">
    <molecule>Non-structural protein 4B</molecule>
    <text evidence="2">Interacts with serine protease NS3.</text>
</comment>
<comment type="subunit">
    <molecule>RNA-directed RNA polymerase NS5</molecule>
    <text evidence="2">Homodimer. Interacts with host STAT2; this interaction inhibits the phosphorylation of the latter, and, when all viral proteins are present (polyprotein), targets STAT2 for degradation. Interacts with serine protease NS3.</text>
</comment>
<comment type="subcellular location">
    <molecule>Protein C</molecule>
    <subcellularLocation>
        <location evidence="2">Virion</location>
    </subcellularLocation>
    <subcellularLocation>
        <location evidence="2">Host nucleus</location>
    </subcellularLocation>
</comment>
<comment type="subcellular location">
    <molecule>Peptide pr</molecule>
    <subcellularLocation>
        <location evidence="2">Secreted</location>
    </subcellularLocation>
</comment>
<comment type="subcellular location">
    <molecule>Small envelope protein M</molecule>
    <subcellularLocation>
        <location evidence="2">Virion membrane</location>
        <topology evidence="2">Multi-pass membrane protein</topology>
    </subcellularLocation>
    <subcellularLocation>
        <location evidence="2 12">Host endoplasmic reticulum membrane</location>
        <topology evidence="2">Multi-pass membrane protein</topology>
    </subcellularLocation>
</comment>
<comment type="subcellular location">
    <molecule>Envelope protein E</molecule>
    <subcellularLocation>
        <location evidence="2">Virion membrane</location>
        <topology evidence="2">Multi-pass membrane protein</topology>
    </subcellularLocation>
    <subcellularLocation>
        <location evidence="2 12">Host endoplasmic reticulum membrane</location>
        <topology evidence="2">Multi-pass membrane protein</topology>
    </subcellularLocation>
</comment>
<comment type="subcellular location">
    <molecule>Non-structural protein 1</molecule>
    <subcellularLocation>
        <location evidence="2">Secreted</location>
    </subcellularLocation>
    <subcellularLocation>
        <location evidence="12">Host endoplasmic reticulum membrane</location>
        <topology evidence="12">Peripheral membrane protein</topology>
        <orientation evidence="2">Lumenal side</orientation>
    </subcellularLocation>
</comment>
<comment type="subcellular location">
    <molecule>Non-structural protein 2A-alpha</molecule>
    <subcellularLocation>
        <location evidence="12">Host endoplasmic reticulum membrane</location>
        <topology evidence="2">Multi-pass membrane protein</topology>
    </subcellularLocation>
</comment>
<comment type="subcellular location">
    <molecule>Non-structural protein 2A</molecule>
    <subcellularLocation>
        <location evidence="12">Host endoplasmic reticulum membrane</location>
        <topology evidence="2">Multi-pass membrane protein</topology>
    </subcellularLocation>
</comment>
<comment type="subcellular location">
    <molecule>Serine protease subunit NS2B</molecule>
    <subcellularLocation>
        <location evidence="12">Host endoplasmic reticulum membrane</location>
        <topology evidence="12">Peripheral membrane protein</topology>
        <orientation evidence="2 12">Cytoplasmic side</orientation>
    </subcellularLocation>
</comment>
<comment type="subcellular location">
    <molecule>Serine protease NS3</molecule>
    <subcellularLocation>
        <location evidence="12">Host endoplasmic reticulum membrane</location>
        <topology evidence="12">Peripheral membrane protein</topology>
        <orientation evidence="12">Cytoplasmic side</orientation>
    </subcellularLocation>
    <text evidence="12">Remains non-covalently associated to NS3 protease.</text>
</comment>
<comment type="subcellular location">
    <molecule>Non-structural protein 4A</molecule>
    <subcellularLocation>
        <location evidence="2">Host endoplasmic reticulum membrane</location>
        <topology evidence="2">Multi-pass membrane protein</topology>
    </subcellularLocation>
    <subcellularLocation>
        <location evidence="2">Host mitochondrion</location>
    </subcellularLocation>
    <text evidence="2">Located in RE-associated vesicles hosting the replication complex. Interacts with host MAVS in the mitochondrion-associated endoplasmic reticulum membranes.</text>
</comment>
<comment type="subcellular location">
    <molecule>Non-structural protein 4B</molecule>
    <subcellularLocation>
        <location evidence="12">Host endoplasmic reticulum membrane</location>
        <topology evidence="2">Multi-pass membrane protein</topology>
    </subcellularLocation>
</comment>
<comment type="subcellular location">
    <molecule>RNA-directed RNA polymerase NS5</molecule>
    <subcellularLocation>
        <location evidence="12">Host endoplasmic reticulum membrane</location>
        <topology evidence="12">Peripheral membrane protein</topology>
        <orientation evidence="12">Cytoplasmic side</orientation>
    </subcellularLocation>
    <subcellularLocation>
        <location evidence="2">Host nucleus</location>
    </subcellularLocation>
    <text evidence="2">Located in RE-associated vesicles hosting the replication complex.</text>
</comment>
<comment type="domain">
    <text evidence="2">Transmembrane domains of the small envelope protein M and envelope protein E contains an endoplasmic reticulum retention signals.</text>
</comment>
<comment type="PTM">
    <molecule>Genome polyprotein</molecule>
    <text evidence="2">Specific enzymatic cleavages in vivo yield mature proteins. Cleavages in the lumen of endoplasmic reticulum are performed by host signal peptidase, wereas cleavages in the cytoplasmic side are performed by the Serine protease NS3. Signal cleavage at the 2K-4B site requires a prior NS3 protease-mediated cleavage at the 4A-2K site.</text>
</comment>
<comment type="PTM">
    <molecule>Non-structural protein 2A-alpha</molecule>
    <text evidence="2">A C-terminally truncated form of non-structural protein 2A, results from partial cleavage by NS3.</text>
</comment>
<comment type="PTM">
    <molecule>Protein prM</molecule>
    <text evidence="2">Cleaved in post-Golgi vesicles by a host furin, releasing the mature small envelope protein M, and peptide pr. This cleavage is incomplete as up to 30% of viral particles still carry uncleaved prM.</text>
</comment>
<comment type="PTM">
    <molecule>Non-structural protein 1</molecule>
    <text evidence="2">The excreted form is glycosylated and this is required for efficient secretion of the protein from infected cells.</text>
</comment>
<comment type="PTM">
    <molecule>RNA-directed RNA polymerase NS5</molecule>
    <text evidence="2">Phosphorylated on serines residues. This phosphorylation may trigger NS5 nuclear localization.</text>
</comment>
<comment type="PTM">
    <molecule>Envelope protein E</molecule>
    <text evidence="2">N-glycosylated.</text>
</comment>
<comment type="PTM">
    <molecule>Non-structural protein 1</molecule>
    <text evidence="2">N-glycosylated.</text>
</comment>
<comment type="PTM">
    <molecule>Serine protease NS3</molecule>
    <text evidence="4">Acetylated by host KAT5. Acetylation modulates NS3 RNA-binding and unwinding activities and plays an important positive role for viral replication.</text>
</comment>
<comment type="similarity">
    <text evidence="13">In the N-terminal section; belongs to the class I-like SAM-binding methyltransferase superfamily. mRNA cap 0-1 NS5-type methyltransferase family.</text>
</comment>